<organism>
    <name type="scientific">Enterobacter sp. (strain 638)</name>
    <dbReference type="NCBI Taxonomy" id="399742"/>
    <lineage>
        <taxon>Bacteria</taxon>
        <taxon>Pseudomonadati</taxon>
        <taxon>Pseudomonadota</taxon>
        <taxon>Gammaproteobacteria</taxon>
        <taxon>Enterobacterales</taxon>
        <taxon>Enterobacteriaceae</taxon>
        <taxon>Enterobacter</taxon>
    </lineage>
</organism>
<accession>A4WDV9</accession>
<reference key="1">
    <citation type="journal article" date="2010" name="PLoS Genet.">
        <title>Genome sequence of the plant growth promoting endophytic bacterium Enterobacter sp. 638.</title>
        <authorList>
            <person name="Taghavi S."/>
            <person name="van der Lelie D."/>
            <person name="Hoffman A."/>
            <person name="Zhang Y.B."/>
            <person name="Walla M.D."/>
            <person name="Vangronsveld J."/>
            <person name="Newman L."/>
            <person name="Monchy S."/>
        </authorList>
    </citation>
    <scope>NUCLEOTIDE SEQUENCE [LARGE SCALE GENOMIC DNA]</scope>
    <source>
        <strain>638</strain>
    </source>
</reference>
<proteinExistence type="inferred from homology"/>
<evidence type="ECO:0000255" key="1">
    <source>
        <dbReference type="HAMAP-Rule" id="MF_00063"/>
    </source>
</evidence>
<feature type="chain" id="PRO_1000057432" description="Phosphoadenosine 5'-phosphosulfate reductase">
    <location>
        <begin position="1"/>
        <end position="244"/>
    </location>
</feature>
<feature type="active site" description="Nucleophile; cysteine thiosulfonate intermediate" evidence="1">
    <location>
        <position position="239"/>
    </location>
</feature>
<dbReference type="EC" id="1.8.4.8" evidence="1"/>
<dbReference type="EMBL" id="CP000653">
    <property type="protein sequence ID" value="ABP61889.1"/>
    <property type="molecule type" value="Genomic_DNA"/>
</dbReference>
<dbReference type="RefSeq" id="WP_015960218.1">
    <property type="nucleotide sequence ID" value="NC_009436.1"/>
</dbReference>
<dbReference type="SMR" id="A4WDV9"/>
<dbReference type="STRING" id="399742.Ent638_3225"/>
<dbReference type="KEGG" id="ent:Ent638_3225"/>
<dbReference type="eggNOG" id="COG0175">
    <property type="taxonomic scope" value="Bacteria"/>
</dbReference>
<dbReference type="HOGENOM" id="CLU_044089_3_0_6"/>
<dbReference type="OrthoDB" id="9794018at2"/>
<dbReference type="UniPathway" id="UPA00140">
    <property type="reaction ID" value="UER00206"/>
</dbReference>
<dbReference type="Proteomes" id="UP000000230">
    <property type="component" value="Chromosome"/>
</dbReference>
<dbReference type="GO" id="GO:0005737">
    <property type="term" value="C:cytoplasm"/>
    <property type="evidence" value="ECO:0007669"/>
    <property type="project" value="UniProtKB-SubCell"/>
</dbReference>
<dbReference type="GO" id="GO:0004604">
    <property type="term" value="F:phosphoadenylyl-sulfate reductase (thioredoxin) activity"/>
    <property type="evidence" value="ECO:0007669"/>
    <property type="project" value="UniProtKB-UniRule"/>
</dbReference>
<dbReference type="GO" id="GO:0070814">
    <property type="term" value="P:hydrogen sulfide biosynthetic process"/>
    <property type="evidence" value="ECO:0007669"/>
    <property type="project" value="UniProtKB-UniRule"/>
</dbReference>
<dbReference type="GO" id="GO:0019379">
    <property type="term" value="P:sulfate assimilation, phosphoadenylyl sulfate reduction by phosphoadenylyl-sulfate reductase (thioredoxin)"/>
    <property type="evidence" value="ECO:0007669"/>
    <property type="project" value="UniProtKB-UniRule"/>
</dbReference>
<dbReference type="CDD" id="cd23945">
    <property type="entry name" value="PAPS_reductase"/>
    <property type="match status" value="1"/>
</dbReference>
<dbReference type="FunFam" id="3.40.50.620:FF:000043">
    <property type="entry name" value="Phosphoadenosine phosphosulfate reductase"/>
    <property type="match status" value="1"/>
</dbReference>
<dbReference type="Gene3D" id="3.40.50.620">
    <property type="entry name" value="HUPs"/>
    <property type="match status" value="1"/>
</dbReference>
<dbReference type="HAMAP" id="MF_00063">
    <property type="entry name" value="CysH"/>
    <property type="match status" value="1"/>
</dbReference>
<dbReference type="InterPro" id="IPR004511">
    <property type="entry name" value="PAPS/APS_Rdtase"/>
</dbReference>
<dbReference type="InterPro" id="IPR002500">
    <property type="entry name" value="PAPS_reduct_dom"/>
</dbReference>
<dbReference type="InterPro" id="IPR011800">
    <property type="entry name" value="PAPS_reductase_CysH"/>
</dbReference>
<dbReference type="InterPro" id="IPR014729">
    <property type="entry name" value="Rossmann-like_a/b/a_fold"/>
</dbReference>
<dbReference type="NCBIfam" id="TIGR00434">
    <property type="entry name" value="cysH"/>
    <property type="match status" value="1"/>
</dbReference>
<dbReference type="NCBIfam" id="TIGR02057">
    <property type="entry name" value="PAPS_reductase"/>
    <property type="match status" value="1"/>
</dbReference>
<dbReference type="NCBIfam" id="NF002537">
    <property type="entry name" value="PRK02090.1"/>
    <property type="match status" value="1"/>
</dbReference>
<dbReference type="PANTHER" id="PTHR46509">
    <property type="entry name" value="PHOSPHOADENOSINE PHOSPHOSULFATE REDUCTASE"/>
    <property type="match status" value="1"/>
</dbReference>
<dbReference type="PANTHER" id="PTHR46509:SF1">
    <property type="entry name" value="PHOSPHOADENOSINE PHOSPHOSULFATE REDUCTASE"/>
    <property type="match status" value="1"/>
</dbReference>
<dbReference type="Pfam" id="PF01507">
    <property type="entry name" value="PAPS_reduct"/>
    <property type="match status" value="1"/>
</dbReference>
<dbReference type="PIRSF" id="PIRSF000857">
    <property type="entry name" value="PAPS_reductase"/>
    <property type="match status" value="1"/>
</dbReference>
<dbReference type="SUPFAM" id="SSF52402">
    <property type="entry name" value="Adenine nucleotide alpha hydrolases-like"/>
    <property type="match status" value="1"/>
</dbReference>
<gene>
    <name evidence="1" type="primary">cysH</name>
    <name type="ordered locus">Ent638_3225</name>
</gene>
<comment type="function">
    <text evidence="1">Catalyzes the formation of sulfite from phosphoadenosine 5'-phosphosulfate (PAPS) using thioredoxin as an electron donor.</text>
</comment>
<comment type="catalytic activity">
    <reaction evidence="1">
        <text>[thioredoxin]-disulfide + sulfite + adenosine 3',5'-bisphosphate + 2 H(+) = [thioredoxin]-dithiol + 3'-phosphoadenylyl sulfate</text>
        <dbReference type="Rhea" id="RHEA:11724"/>
        <dbReference type="Rhea" id="RHEA-COMP:10698"/>
        <dbReference type="Rhea" id="RHEA-COMP:10700"/>
        <dbReference type="ChEBI" id="CHEBI:15378"/>
        <dbReference type="ChEBI" id="CHEBI:17359"/>
        <dbReference type="ChEBI" id="CHEBI:29950"/>
        <dbReference type="ChEBI" id="CHEBI:50058"/>
        <dbReference type="ChEBI" id="CHEBI:58339"/>
        <dbReference type="ChEBI" id="CHEBI:58343"/>
        <dbReference type="EC" id="1.8.4.8"/>
    </reaction>
</comment>
<comment type="pathway">
    <text evidence="1">Sulfur metabolism; hydrogen sulfide biosynthesis; sulfite from sulfate: step 3/3.</text>
</comment>
<comment type="subcellular location">
    <subcellularLocation>
        <location evidence="1">Cytoplasm</location>
    </subcellularLocation>
</comment>
<comment type="similarity">
    <text evidence="1">Belongs to the PAPS reductase family. CysH subfamily.</text>
</comment>
<protein>
    <recommendedName>
        <fullName evidence="1">Phosphoadenosine 5'-phosphosulfate reductase</fullName>
        <shortName evidence="1">PAPS reductase</shortName>
        <ecNumber evidence="1">1.8.4.8</ecNumber>
    </recommendedName>
    <alternativeName>
        <fullName evidence="1">3'-phosphoadenylylsulfate reductase</fullName>
    </alternativeName>
    <alternativeName>
        <fullName evidence="1">PAPS reductase, thioredoxin dependent</fullName>
    </alternativeName>
    <alternativeName>
        <fullName evidence="1">PAPS sulfotransferase</fullName>
    </alternativeName>
    <alternativeName>
        <fullName evidence="1">PAdoPS reductase</fullName>
    </alternativeName>
</protein>
<sequence>MSLLDLNALNDLPKVERILALAETNAKLEKLDAEGRVAWALENLPGEYALSSSFGIQAAVSLHLVNTIRPDIPVILTDTGYLFPETYQFIDELADKLKLNLKVYRAEQSAAWQEARYGKLWEQGVEGIEKYNDINKVEPMNRALEELNVKTWFAGLRREQSGSRASLPVLGIQRGVFKVLPIIDWDNRTVYQYLQKHGLKYHPLWDQGYLSVGDTHTTRKWEPGMAEEETRFFGLKRECGLHEG</sequence>
<keyword id="KW-0963">Cytoplasm</keyword>
<keyword id="KW-0560">Oxidoreductase</keyword>
<name>CYSH_ENT38</name>